<organism>
    <name type="scientific">Shewanella sp. (strain MR-7)</name>
    <dbReference type="NCBI Taxonomy" id="60481"/>
    <lineage>
        <taxon>Bacteria</taxon>
        <taxon>Pseudomonadati</taxon>
        <taxon>Pseudomonadota</taxon>
        <taxon>Gammaproteobacteria</taxon>
        <taxon>Alteromonadales</taxon>
        <taxon>Shewanellaceae</taxon>
        <taxon>Shewanella</taxon>
    </lineage>
</organism>
<sequence length="214" mass="23063">MRIILLGAPGAGKGTQAQFIMEQYGIPQISTGDMLRAAVKAGTPLGLEAKKVMDAGQLVSDDLIIGLVKERIAQDDCVKGFLLDGFPRTIPQADAMAANGISIDHVIEIDVPDEEIVKRMSGRRVHPGSGRVYHVVFNPPKVEGKDDVTGEDLAIRPDDEEATVRKRLGIYHEQTKPLVEYYGKVAAAGNTQYHKFDGTQSVAAVSAQLASVLK</sequence>
<proteinExistence type="inferred from homology"/>
<dbReference type="EC" id="2.7.4.3" evidence="1"/>
<dbReference type="EMBL" id="CP000444">
    <property type="protein sequence ID" value="ABI43308.1"/>
    <property type="molecule type" value="Genomic_DNA"/>
</dbReference>
<dbReference type="SMR" id="Q0HU97"/>
<dbReference type="KEGG" id="shm:Shewmr7_2321"/>
<dbReference type="HOGENOM" id="CLU_032354_1_2_6"/>
<dbReference type="UniPathway" id="UPA00588">
    <property type="reaction ID" value="UER00649"/>
</dbReference>
<dbReference type="GO" id="GO:0005737">
    <property type="term" value="C:cytoplasm"/>
    <property type="evidence" value="ECO:0007669"/>
    <property type="project" value="UniProtKB-SubCell"/>
</dbReference>
<dbReference type="GO" id="GO:0004017">
    <property type="term" value="F:adenylate kinase activity"/>
    <property type="evidence" value="ECO:0007669"/>
    <property type="project" value="UniProtKB-UniRule"/>
</dbReference>
<dbReference type="GO" id="GO:0005524">
    <property type="term" value="F:ATP binding"/>
    <property type="evidence" value="ECO:0007669"/>
    <property type="project" value="UniProtKB-UniRule"/>
</dbReference>
<dbReference type="GO" id="GO:0044209">
    <property type="term" value="P:AMP salvage"/>
    <property type="evidence" value="ECO:0007669"/>
    <property type="project" value="UniProtKB-UniRule"/>
</dbReference>
<dbReference type="CDD" id="cd01428">
    <property type="entry name" value="ADK"/>
    <property type="match status" value="1"/>
</dbReference>
<dbReference type="FunFam" id="3.40.50.300:FF:000106">
    <property type="entry name" value="Adenylate kinase mitochondrial"/>
    <property type="match status" value="1"/>
</dbReference>
<dbReference type="Gene3D" id="3.40.50.300">
    <property type="entry name" value="P-loop containing nucleotide triphosphate hydrolases"/>
    <property type="match status" value="1"/>
</dbReference>
<dbReference type="HAMAP" id="MF_00235">
    <property type="entry name" value="Adenylate_kinase_Adk"/>
    <property type="match status" value="1"/>
</dbReference>
<dbReference type="InterPro" id="IPR006259">
    <property type="entry name" value="Adenyl_kin_sub"/>
</dbReference>
<dbReference type="InterPro" id="IPR000850">
    <property type="entry name" value="Adenylat/UMP-CMP_kin"/>
</dbReference>
<dbReference type="InterPro" id="IPR033690">
    <property type="entry name" value="Adenylat_kinase_CS"/>
</dbReference>
<dbReference type="InterPro" id="IPR007862">
    <property type="entry name" value="Adenylate_kinase_lid-dom"/>
</dbReference>
<dbReference type="InterPro" id="IPR027417">
    <property type="entry name" value="P-loop_NTPase"/>
</dbReference>
<dbReference type="NCBIfam" id="TIGR01351">
    <property type="entry name" value="adk"/>
    <property type="match status" value="1"/>
</dbReference>
<dbReference type="NCBIfam" id="NF001379">
    <property type="entry name" value="PRK00279.1-1"/>
    <property type="match status" value="1"/>
</dbReference>
<dbReference type="NCBIfam" id="NF001380">
    <property type="entry name" value="PRK00279.1-2"/>
    <property type="match status" value="1"/>
</dbReference>
<dbReference type="NCBIfam" id="NF001381">
    <property type="entry name" value="PRK00279.1-3"/>
    <property type="match status" value="1"/>
</dbReference>
<dbReference type="NCBIfam" id="NF011100">
    <property type="entry name" value="PRK14527.1"/>
    <property type="match status" value="1"/>
</dbReference>
<dbReference type="PANTHER" id="PTHR23359">
    <property type="entry name" value="NUCLEOTIDE KINASE"/>
    <property type="match status" value="1"/>
</dbReference>
<dbReference type="Pfam" id="PF00406">
    <property type="entry name" value="ADK"/>
    <property type="match status" value="1"/>
</dbReference>
<dbReference type="Pfam" id="PF05191">
    <property type="entry name" value="ADK_lid"/>
    <property type="match status" value="1"/>
</dbReference>
<dbReference type="PRINTS" id="PR00094">
    <property type="entry name" value="ADENYLTKNASE"/>
</dbReference>
<dbReference type="SUPFAM" id="SSF52540">
    <property type="entry name" value="P-loop containing nucleoside triphosphate hydrolases"/>
    <property type="match status" value="1"/>
</dbReference>
<dbReference type="PROSITE" id="PS00113">
    <property type="entry name" value="ADENYLATE_KINASE"/>
    <property type="match status" value="1"/>
</dbReference>
<comment type="function">
    <text evidence="1">Catalyzes the reversible transfer of the terminal phosphate group between ATP and AMP. Plays an important role in cellular energy homeostasis and in adenine nucleotide metabolism.</text>
</comment>
<comment type="catalytic activity">
    <reaction evidence="1">
        <text>AMP + ATP = 2 ADP</text>
        <dbReference type="Rhea" id="RHEA:12973"/>
        <dbReference type="ChEBI" id="CHEBI:30616"/>
        <dbReference type="ChEBI" id="CHEBI:456215"/>
        <dbReference type="ChEBI" id="CHEBI:456216"/>
        <dbReference type="EC" id="2.7.4.3"/>
    </reaction>
</comment>
<comment type="pathway">
    <text evidence="1">Purine metabolism; AMP biosynthesis via salvage pathway; AMP from ADP: step 1/1.</text>
</comment>
<comment type="subunit">
    <text evidence="1">Monomer.</text>
</comment>
<comment type="subcellular location">
    <subcellularLocation>
        <location evidence="1">Cytoplasm</location>
    </subcellularLocation>
</comment>
<comment type="domain">
    <text evidence="1">Consists of three domains, a large central CORE domain and two small peripheral domains, NMPbind and LID, which undergo movements during catalysis. The LID domain closes over the site of phosphoryl transfer upon ATP binding. Assembling and dissambling the active center during each catalytic cycle provides an effective means to prevent ATP hydrolysis.</text>
</comment>
<comment type="similarity">
    <text evidence="1">Belongs to the adenylate kinase family.</text>
</comment>
<protein>
    <recommendedName>
        <fullName evidence="1">Adenylate kinase</fullName>
        <shortName evidence="1">AK</shortName>
        <ecNumber evidence="1">2.7.4.3</ecNumber>
    </recommendedName>
    <alternativeName>
        <fullName evidence="1">ATP-AMP transphosphorylase</fullName>
    </alternativeName>
    <alternativeName>
        <fullName evidence="1">ATP:AMP phosphotransferase</fullName>
    </alternativeName>
    <alternativeName>
        <fullName evidence="1">Adenylate monophosphate kinase</fullName>
    </alternativeName>
</protein>
<accession>Q0HU97</accession>
<name>KAD_SHESR</name>
<gene>
    <name evidence="1" type="primary">adk</name>
    <name type="ordered locus">Shewmr7_2321</name>
</gene>
<keyword id="KW-0067">ATP-binding</keyword>
<keyword id="KW-0963">Cytoplasm</keyword>
<keyword id="KW-0418">Kinase</keyword>
<keyword id="KW-0545">Nucleotide biosynthesis</keyword>
<keyword id="KW-0547">Nucleotide-binding</keyword>
<keyword id="KW-0808">Transferase</keyword>
<evidence type="ECO:0000255" key="1">
    <source>
        <dbReference type="HAMAP-Rule" id="MF_00235"/>
    </source>
</evidence>
<feature type="chain" id="PRO_1000058902" description="Adenylate kinase">
    <location>
        <begin position="1"/>
        <end position="214"/>
    </location>
</feature>
<feature type="region of interest" description="NMP" evidence="1">
    <location>
        <begin position="30"/>
        <end position="59"/>
    </location>
</feature>
<feature type="region of interest" description="LID" evidence="1">
    <location>
        <begin position="122"/>
        <end position="159"/>
    </location>
</feature>
<feature type="binding site" evidence="1">
    <location>
        <begin position="10"/>
        <end position="15"/>
    </location>
    <ligand>
        <name>ATP</name>
        <dbReference type="ChEBI" id="CHEBI:30616"/>
    </ligand>
</feature>
<feature type="binding site" evidence="1">
    <location>
        <position position="31"/>
    </location>
    <ligand>
        <name>AMP</name>
        <dbReference type="ChEBI" id="CHEBI:456215"/>
    </ligand>
</feature>
<feature type="binding site" evidence="1">
    <location>
        <position position="36"/>
    </location>
    <ligand>
        <name>AMP</name>
        <dbReference type="ChEBI" id="CHEBI:456215"/>
    </ligand>
</feature>
<feature type="binding site" evidence="1">
    <location>
        <begin position="57"/>
        <end position="59"/>
    </location>
    <ligand>
        <name>AMP</name>
        <dbReference type="ChEBI" id="CHEBI:456215"/>
    </ligand>
</feature>
<feature type="binding site" evidence="1">
    <location>
        <begin position="85"/>
        <end position="88"/>
    </location>
    <ligand>
        <name>AMP</name>
        <dbReference type="ChEBI" id="CHEBI:456215"/>
    </ligand>
</feature>
<feature type="binding site" evidence="1">
    <location>
        <position position="92"/>
    </location>
    <ligand>
        <name>AMP</name>
        <dbReference type="ChEBI" id="CHEBI:456215"/>
    </ligand>
</feature>
<feature type="binding site" evidence="1">
    <location>
        <position position="123"/>
    </location>
    <ligand>
        <name>ATP</name>
        <dbReference type="ChEBI" id="CHEBI:30616"/>
    </ligand>
</feature>
<feature type="binding site" evidence="1">
    <location>
        <begin position="132"/>
        <end position="133"/>
    </location>
    <ligand>
        <name>ATP</name>
        <dbReference type="ChEBI" id="CHEBI:30616"/>
    </ligand>
</feature>
<feature type="binding site" evidence="1">
    <location>
        <position position="156"/>
    </location>
    <ligand>
        <name>AMP</name>
        <dbReference type="ChEBI" id="CHEBI:456215"/>
    </ligand>
</feature>
<feature type="binding site" evidence="1">
    <location>
        <position position="167"/>
    </location>
    <ligand>
        <name>AMP</name>
        <dbReference type="ChEBI" id="CHEBI:456215"/>
    </ligand>
</feature>
<feature type="binding site" evidence="1">
    <location>
        <position position="200"/>
    </location>
    <ligand>
        <name>ATP</name>
        <dbReference type="ChEBI" id="CHEBI:30616"/>
    </ligand>
</feature>
<reference key="1">
    <citation type="submission" date="2006-08" db="EMBL/GenBank/DDBJ databases">
        <title>Complete sequence of chromosome 1 of Shewanella sp. MR-7.</title>
        <authorList>
            <person name="Copeland A."/>
            <person name="Lucas S."/>
            <person name="Lapidus A."/>
            <person name="Barry K."/>
            <person name="Detter J.C."/>
            <person name="Glavina del Rio T."/>
            <person name="Hammon N."/>
            <person name="Israni S."/>
            <person name="Dalin E."/>
            <person name="Tice H."/>
            <person name="Pitluck S."/>
            <person name="Kiss H."/>
            <person name="Brettin T."/>
            <person name="Bruce D."/>
            <person name="Han C."/>
            <person name="Tapia R."/>
            <person name="Gilna P."/>
            <person name="Schmutz J."/>
            <person name="Larimer F."/>
            <person name="Land M."/>
            <person name="Hauser L."/>
            <person name="Kyrpides N."/>
            <person name="Mikhailova N."/>
            <person name="Nealson K."/>
            <person name="Konstantinidis K."/>
            <person name="Klappenbach J."/>
            <person name="Tiedje J."/>
            <person name="Richardson P."/>
        </authorList>
    </citation>
    <scope>NUCLEOTIDE SEQUENCE [LARGE SCALE GENOMIC DNA]</scope>
    <source>
        <strain>MR-7</strain>
    </source>
</reference>